<accession>Q91VJ1</accession>
<proteinExistence type="evidence at protein level"/>
<protein>
    <recommendedName>
        <fullName>Interferon-inducible protein AIM2</fullName>
    </recommendedName>
    <alternativeName>
        <fullName evidence="27">Interferon-inducible protein 210</fullName>
        <shortName evidence="27">Ifi-210</shortName>
    </alternativeName>
    <alternativeName>
        <fullName evidence="27">Interferon-inducible protein p210</fullName>
    </alternativeName>
</protein>
<name>AIM2_MOUSE</name>
<feature type="chain" id="PRO_0000334528" description="Interferon-inducible protein AIM2">
    <location>
        <begin position="1"/>
        <end position="354"/>
    </location>
</feature>
<feature type="domain" description="Pyrin" evidence="2">
    <location>
        <begin position="1"/>
        <end position="87"/>
    </location>
</feature>
<feature type="domain" description="HIN-200" evidence="3">
    <location>
        <begin position="144"/>
        <end position="341"/>
    </location>
</feature>
<feature type="region of interest" description="Disordered" evidence="4">
    <location>
        <begin position="95"/>
        <end position="124"/>
    </location>
</feature>
<feature type="compositionally biased region" description="Polar residues" evidence="4">
    <location>
        <begin position="109"/>
        <end position="120"/>
    </location>
</feature>
<feature type="helix" evidence="32">
    <location>
        <begin position="2"/>
        <end position="14"/>
    </location>
</feature>
<feature type="helix" evidence="32">
    <location>
        <begin position="19"/>
        <end position="29"/>
    </location>
</feature>
<feature type="strand" evidence="32">
    <location>
        <begin position="31"/>
        <end position="33"/>
    </location>
</feature>
<feature type="helix" evidence="32">
    <location>
        <begin position="39"/>
        <end position="41"/>
    </location>
</feature>
<feature type="turn" evidence="32">
    <location>
        <begin position="42"/>
        <end position="46"/>
    </location>
</feature>
<feature type="helix" evidence="32">
    <location>
        <begin position="47"/>
        <end position="55"/>
    </location>
</feature>
<feature type="helix" evidence="32">
    <location>
        <begin position="58"/>
        <end position="72"/>
    </location>
</feature>
<feature type="turn" evidence="32">
    <location>
        <begin position="73"/>
        <end position="77"/>
    </location>
</feature>
<feature type="helix" evidence="32">
    <location>
        <begin position="78"/>
        <end position="91"/>
    </location>
</feature>
<feature type="strand" evidence="33">
    <location>
        <begin position="160"/>
        <end position="167"/>
    </location>
</feature>
<feature type="strand" evidence="33">
    <location>
        <begin position="181"/>
        <end position="188"/>
    </location>
</feature>
<feature type="strand" evidence="33">
    <location>
        <begin position="193"/>
        <end position="199"/>
    </location>
</feature>
<feature type="helix" evidence="33">
    <location>
        <begin position="202"/>
        <end position="206"/>
    </location>
</feature>
<feature type="strand" evidence="33">
    <location>
        <begin position="212"/>
        <end position="217"/>
    </location>
</feature>
<feature type="strand" evidence="33">
    <location>
        <begin position="225"/>
        <end position="227"/>
    </location>
</feature>
<feature type="strand" evidence="33">
    <location>
        <begin position="231"/>
        <end position="235"/>
    </location>
</feature>
<feature type="helix" evidence="33">
    <location>
        <begin position="244"/>
        <end position="251"/>
    </location>
</feature>
<feature type="helix" evidence="33">
    <location>
        <begin position="256"/>
        <end position="259"/>
    </location>
</feature>
<feature type="strand" evidence="33">
    <location>
        <begin position="267"/>
        <end position="279"/>
    </location>
</feature>
<feature type="strand" evidence="33">
    <location>
        <begin position="281"/>
        <end position="290"/>
    </location>
</feature>
<feature type="strand" evidence="33">
    <location>
        <begin position="293"/>
        <end position="301"/>
    </location>
</feature>
<feature type="strand" evidence="33">
    <location>
        <begin position="313"/>
        <end position="324"/>
    </location>
</feature>
<feature type="strand" evidence="33">
    <location>
        <begin position="327"/>
        <end position="331"/>
    </location>
</feature>
<feature type="strand" evidence="33">
    <location>
        <begin position="337"/>
        <end position="341"/>
    </location>
</feature>
<keyword id="KW-0002">3D-structure</keyword>
<keyword id="KW-0963">Cytoplasm</keyword>
<keyword id="KW-0227">DNA damage</keyword>
<keyword id="KW-0238">DNA-binding</keyword>
<keyword id="KW-0391">Immunity</keyword>
<keyword id="KW-1271">Inflammasome</keyword>
<keyword id="KW-0395">Inflammatory response</keyword>
<keyword id="KW-0399">Innate immunity</keyword>
<keyword id="KW-0539">Nucleus</keyword>
<keyword id="KW-1185">Reference proteome</keyword>
<keyword id="KW-0043">Tumor suppressor</keyword>
<dbReference type="EMBL" id="AC084073">
    <property type="status" value="NOT_ANNOTATED_CDS"/>
    <property type="molecule type" value="Genomic_DNA"/>
</dbReference>
<dbReference type="EMBL" id="BC009664">
    <property type="protein sequence ID" value="AAH09664.1"/>
    <property type="status" value="ALT_INIT"/>
    <property type="molecule type" value="mRNA"/>
</dbReference>
<dbReference type="CCDS" id="CCDS15529.2"/>
<dbReference type="RefSeq" id="NP_001013801.2">
    <property type="nucleotide sequence ID" value="NM_001013779.2"/>
</dbReference>
<dbReference type="RefSeq" id="XP_006496982.1">
    <property type="nucleotide sequence ID" value="XM_006496919.4"/>
</dbReference>
<dbReference type="RefSeq" id="XP_006496989.1">
    <property type="nucleotide sequence ID" value="XM_006496926.3"/>
</dbReference>
<dbReference type="RefSeq" id="XP_011237133.1">
    <property type="nucleotide sequence ID" value="XM_011238831.4"/>
</dbReference>
<dbReference type="RefSeq" id="XP_011237137.1">
    <property type="nucleotide sequence ID" value="XM_011238835.3"/>
</dbReference>
<dbReference type="RefSeq" id="XP_011237144.1">
    <property type="nucleotide sequence ID" value="XM_011238842.3"/>
</dbReference>
<dbReference type="RefSeq" id="XP_017176969.1">
    <property type="nucleotide sequence ID" value="XM_017321480.1"/>
</dbReference>
<dbReference type="RefSeq" id="XP_017176971.1">
    <property type="nucleotide sequence ID" value="XM_017321482.1"/>
</dbReference>
<dbReference type="RefSeq" id="XP_017176972.1">
    <property type="nucleotide sequence ID" value="XM_017321483.1"/>
</dbReference>
<dbReference type="RefSeq" id="XP_017176975.1">
    <property type="nucleotide sequence ID" value="XM_017321486.3"/>
</dbReference>
<dbReference type="RefSeq" id="XP_017176976.1">
    <property type="nucleotide sequence ID" value="XM_017321487.1"/>
</dbReference>
<dbReference type="RefSeq" id="XP_017176977.1">
    <property type="nucleotide sequence ID" value="XM_017321488.1"/>
</dbReference>
<dbReference type="RefSeq" id="XP_017176981.1">
    <property type="nucleotide sequence ID" value="XM_017321492.3"/>
</dbReference>
<dbReference type="RefSeq" id="XP_017176983.1">
    <property type="nucleotide sequence ID" value="XM_017321494.1"/>
</dbReference>
<dbReference type="RefSeq" id="XP_017176985.1">
    <property type="nucleotide sequence ID" value="XM_017321496.3"/>
</dbReference>
<dbReference type="RefSeq" id="XP_017176987.1">
    <property type="nucleotide sequence ID" value="XM_017321498.3"/>
</dbReference>
<dbReference type="RefSeq" id="XP_017176990.1">
    <property type="nucleotide sequence ID" value="XM_017321501.3"/>
</dbReference>
<dbReference type="RefSeq" id="XP_017176994.1">
    <property type="nucleotide sequence ID" value="XM_017321505.3"/>
</dbReference>
<dbReference type="RefSeq" id="XP_017176996.1">
    <property type="nucleotide sequence ID" value="XM_017321507.1"/>
</dbReference>
<dbReference type="RefSeq" id="XP_017176999.1">
    <property type="nucleotide sequence ID" value="XM_017321510.1"/>
</dbReference>
<dbReference type="RefSeq" id="XP_030111101.1">
    <property type="nucleotide sequence ID" value="XM_030255241.2"/>
</dbReference>
<dbReference type="RefSeq" id="XP_036022131.1">
    <property type="nucleotide sequence ID" value="XM_036166238.1"/>
</dbReference>
<dbReference type="RefSeq" id="XP_036022137.1">
    <property type="nucleotide sequence ID" value="XM_036166244.1"/>
</dbReference>
<dbReference type="RefSeq" id="XP_036022138.1">
    <property type="nucleotide sequence ID" value="XM_036166245.1"/>
</dbReference>
<dbReference type="RefSeq" id="XP_036022139.1">
    <property type="nucleotide sequence ID" value="XM_036166246.1"/>
</dbReference>
<dbReference type="RefSeq" id="XP_036022140.1">
    <property type="nucleotide sequence ID" value="XM_036166247.1"/>
</dbReference>
<dbReference type="RefSeq" id="XP_036022141.1">
    <property type="nucleotide sequence ID" value="XM_036166248.1"/>
</dbReference>
<dbReference type="RefSeq" id="XP_036022142.1">
    <property type="nucleotide sequence ID" value="XM_036166249.1"/>
</dbReference>
<dbReference type="RefSeq" id="XP_036022152.1">
    <property type="nucleotide sequence ID" value="XM_036166259.1"/>
</dbReference>
<dbReference type="RefSeq" id="XP_036022153.1">
    <property type="nucleotide sequence ID" value="XM_036166260.1"/>
</dbReference>
<dbReference type="RefSeq" id="XP_036022155.1">
    <property type="nucleotide sequence ID" value="XM_036166262.1"/>
</dbReference>
<dbReference type="RefSeq" id="XP_036022157.1">
    <property type="nucleotide sequence ID" value="XM_036166264.1"/>
</dbReference>
<dbReference type="RefSeq" id="XP_036022158.1">
    <property type="nucleotide sequence ID" value="XM_036166265.1"/>
</dbReference>
<dbReference type="PDB" id="2N00">
    <property type="method" value="NMR"/>
    <property type="chains" value="A=1-95"/>
</dbReference>
<dbReference type="PDB" id="4JBM">
    <property type="method" value="X-ray"/>
    <property type="resolution" value="2.22 A"/>
    <property type="chains" value="A/B=158-349"/>
</dbReference>
<dbReference type="PDBsum" id="2N00"/>
<dbReference type="PDBsum" id="4JBM"/>
<dbReference type="BMRB" id="Q91VJ1"/>
<dbReference type="SMR" id="Q91VJ1"/>
<dbReference type="BioGRID" id="238833">
    <property type="interactions" value="1"/>
</dbReference>
<dbReference type="ComplexPortal" id="CPX-4243">
    <property type="entry name" value="AIM2 inflammasome"/>
</dbReference>
<dbReference type="FunCoup" id="Q91VJ1">
    <property type="interactions" value="73"/>
</dbReference>
<dbReference type="IntAct" id="Q91VJ1">
    <property type="interactions" value="3"/>
</dbReference>
<dbReference type="MINT" id="Q91VJ1"/>
<dbReference type="STRING" id="10090.ENSMUSP00000119465"/>
<dbReference type="BindingDB" id="Q91VJ1"/>
<dbReference type="ChEMBL" id="CHEMBL4295911"/>
<dbReference type="PhosphoSitePlus" id="Q91VJ1"/>
<dbReference type="PaxDb" id="10090-ENSMUSP00000119465"/>
<dbReference type="PeptideAtlas" id="Q91VJ1"/>
<dbReference type="ProteomicsDB" id="296217"/>
<dbReference type="Antibodypedia" id="34257">
    <property type="antibodies" value="623 antibodies from 41 providers"/>
</dbReference>
<dbReference type="DNASU" id="383619"/>
<dbReference type="Ensembl" id="ENSMUST00000147604.8">
    <property type="protein sequence ID" value="ENSMUSP00000119465.2"/>
    <property type="gene ID" value="ENSMUSG00000037860.16"/>
</dbReference>
<dbReference type="Ensembl" id="ENSMUST00000166137.3">
    <property type="protein sequence ID" value="ENSMUSP00000132253.3"/>
    <property type="gene ID" value="ENSMUSG00000037860.16"/>
</dbReference>
<dbReference type="GeneID" id="383619"/>
<dbReference type="KEGG" id="mmu:383619"/>
<dbReference type="UCSC" id="uc011wws.1">
    <property type="organism name" value="mouse"/>
</dbReference>
<dbReference type="AGR" id="MGI:2686159"/>
<dbReference type="CTD" id="9447"/>
<dbReference type="MGI" id="MGI:2686159">
    <property type="gene designation" value="Aim2"/>
</dbReference>
<dbReference type="VEuPathDB" id="HostDB:ENSMUSG00000037860"/>
<dbReference type="eggNOG" id="ENOG502QTQS">
    <property type="taxonomic scope" value="Eukaryota"/>
</dbReference>
<dbReference type="GeneTree" id="ENSGT00390000013296"/>
<dbReference type="HOGENOM" id="CLU_020123_2_0_1"/>
<dbReference type="InParanoid" id="Q91VJ1"/>
<dbReference type="OMA" id="MKCKEGD"/>
<dbReference type="OrthoDB" id="10058437at2759"/>
<dbReference type="PhylomeDB" id="Q91VJ1"/>
<dbReference type="TreeFam" id="TF337385"/>
<dbReference type="Reactome" id="R-MMU-1834949">
    <property type="pathway name" value="Cytosolic sensors of pathogen-associated DNA"/>
</dbReference>
<dbReference type="Reactome" id="R-MMU-844615">
    <property type="pathway name" value="The AIM2 inflammasome"/>
</dbReference>
<dbReference type="BioGRID-ORCS" id="383619">
    <property type="hits" value="2 hits in 79 CRISPR screens"/>
</dbReference>
<dbReference type="ChiTaRS" id="Aim2">
    <property type="organism name" value="mouse"/>
</dbReference>
<dbReference type="EvolutionaryTrace" id="Q91VJ1"/>
<dbReference type="PRO" id="PR:Q91VJ1"/>
<dbReference type="Proteomes" id="UP000000589">
    <property type="component" value="Chromosome 1"/>
</dbReference>
<dbReference type="RNAct" id="Q91VJ1">
    <property type="molecule type" value="protein"/>
</dbReference>
<dbReference type="Bgee" id="ENSMUSG00000037860">
    <property type="expression patterns" value="Expressed in granulocyte and 93 other cell types or tissues"/>
</dbReference>
<dbReference type="ExpressionAtlas" id="Q91VJ1">
    <property type="expression patterns" value="baseline and differential"/>
</dbReference>
<dbReference type="GO" id="GO:0097169">
    <property type="term" value="C:AIM2 inflammasome complex"/>
    <property type="evidence" value="ECO:0000314"/>
    <property type="project" value="UniProtKB"/>
</dbReference>
<dbReference type="GO" id="GO:0005737">
    <property type="term" value="C:cytoplasm"/>
    <property type="evidence" value="ECO:0000314"/>
    <property type="project" value="MGI"/>
</dbReference>
<dbReference type="GO" id="GO:0005829">
    <property type="term" value="C:cytosol"/>
    <property type="evidence" value="ECO:0000304"/>
    <property type="project" value="Reactome"/>
</dbReference>
<dbReference type="GO" id="GO:0005739">
    <property type="term" value="C:mitochondrion"/>
    <property type="evidence" value="ECO:0007669"/>
    <property type="project" value="Ensembl"/>
</dbReference>
<dbReference type="GO" id="GO:0005654">
    <property type="term" value="C:nucleoplasm"/>
    <property type="evidence" value="ECO:0007669"/>
    <property type="project" value="Ensembl"/>
</dbReference>
<dbReference type="GO" id="GO:0005634">
    <property type="term" value="C:nucleus"/>
    <property type="evidence" value="ECO:0000314"/>
    <property type="project" value="UniProtKB"/>
</dbReference>
<dbReference type="GO" id="GO:0035861">
    <property type="term" value="C:site of double-strand break"/>
    <property type="evidence" value="ECO:0000314"/>
    <property type="project" value="UniProtKB"/>
</dbReference>
<dbReference type="GO" id="GO:0140608">
    <property type="term" value="F:cysteine-type endopeptidase activator activity"/>
    <property type="evidence" value="ECO:0000250"/>
    <property type="project" value="UniProt"/>
</dbReference>
<dbReference type="GO" id="GO:0003690">
    <property type="term" value="F:double-stranded DNA binding"/>
    <property type="evidence" value="ECO:0000314"/>
    <property type="project" value="UniProtKB"/>
</dbReference>
<dbReference type="GO" id="GO:0042802">
    <property type="term" value="F:identical protein binding"/>
    <property type="evidence" value="ECO:0000353"/>
    <property type="project" value="IntAct"/>
</dbReference>
<dbReference type="GO" id="GO:0038187">
    <property type="term" value="F:pattern recognition receptor activity"/>
    <property type="evidence" value="ECO:0000314"/>
    <property type="project" value="UniProt"/>
</dbReference>
<dbReference type="GO" id="GO:0035591">
    <property type="term" value="F:signaling adaptor activity"/>
    <property type="evidence" value="ECO:0000314"/>
    <property type="project" value="UniProt"/>
</dbReference>
<dbReference type="GO" id="GO:0002218">
    <property type="term" value="P:activation of innate immune response"/>
    <property type="evidence" value="ECO:0000314"/>
    <property type="project" value="UniProtKB"/>
</dbReference>
<dbReference type="GO" id="GO:0140970">
    <property type="term" value="P:AIM2 inflammasome complex assembly"/>
    <property type="evidence" value="ECO:0000314"/>
    <property type="project" value="UniProtKB"/>
</dbReference>
<dbReference type="GO" id="GO:0007420">
    <property type="term" value="P:brain development"/>
    <property type="evidence" value="ECO:0000314"/>
    <property type="project" value="UniProtKB"/>
</dbReference>
<dbReference type="GO" id="GO:0035458">
    <property type="term" value="P:cellular response to interferon-beta"/>
    <property type="evidence" value="ECO:0000314"/>
    <property type="project" value="MGI"/>
</dbReference>
<dbReference type="GO" id="GO:0071466">
    <property type="term" value="P:cellular response to xenobiotic stimulus"/>
    <property type="evidence" value="ECO:0000266"/>
    <property type="project" value="MGI"/>
</dbReference>
<dbReference type="GO" id="GO:0051607">
    <property type="term" value="P:defense response to virus"/>
    <property type="evidence" value="ECO:0000303"/>
    <property type="project" value="ComplexPortal"/>
</dbReference>
<dbReference type="GO" id="GO:0006974">
    <property type="term" value="P:DNA damage response"/>
    <property type="evidence" value="ECO:0000314"/>
    <property type="project" value="UniProtKB"/>
</dbReference>
<dbReference type="GO" id="GO:0045087">
    <property type="term" value="P:innate immune response"/>
    <property type="evidence" value="ECO:0007669"/>
    <property type="project" value="UniProtKB-KW"/>
</dbReference>
<dbReference type="GO" id="GO:0051898">
    <property type="term" value="P:negative regulation of phosphatidylinositol 3-kinase/protein kinase B signal transduction"/>
    <property type="evidence" value="ECO:0000314"/>
    <property type="project" value="UniProtKB"/>
</dbReference>
<dbReference type="GO" id="GO:0070050">
    <property type="term" value="P:neuron cellular homeostasis"/>
    <property type="evidence" value="ECO:0000314"/>
    <property type="project" value="UniProtKB"/>
</dbReference>
<dbReference type="GO" id="GO:0002221">
    <property type="term" value="P:pattern recognition receptor signaling pathway"/>
    <property type="evidence" value="ECO:0000303"/>
    <property type="project" value="ComplexPortal"/>
</dbReference>
<dbReference type="GO" id="GO:0002230">
    <property type="term" value="P:positive regulation of defense response to virus by host"/>
    <property type="evidence" value="ECO:0000315"/>
    <property type="project" value="UniProtKB"/>
</dbReference>
<dbReference type="GO" id="GO:0050729">
    <property type="term" value="P:positive regulation of inflammatory response"/>
    <property type="evidence" value="ECO:0000303"/>
    <property type="project" value="ComplexPortal"/>
</dbReference>
<dbReference type="GO" id="GO:0032731">
    <property type="term" value="P:positive regulation of interleukin-1 beta production"/>
    <property type="evidence" value="ECO:0000314"/>
    <property type="project" value="UniProtKB"/>
</dbReference>
<dbReference type="GO" id="GO:1904270">
    <property type="term" value="P:pyroptosome complex assembly"/>
    <property type="evidence" value="ECO:0007669"/>
    <property type="project" value="Ensembl"/>
</dbReference>
<dbReference type="GO" id="GO:0070269">
    <property type="term" value="P:pyroptotic inflammatory response"/>
    <property type="evidence" value="ECO:0000314"/>
    <property type="project" value="UniProtKB"/>
</dbReference>
<dbReference type="GO" id="GO:0050795">
    <property type="term" value="P:regulation of behavior"/>
    <property type="evidence" value="ECO:0000314"/>
    <property type="project" value="UniProtKB"/>
</dbReference>
<dbReference type="GO" id="GO:0043029">
    <property type="term" value="P:T cell homeostasis"/>
    <property type="evidence" value="ECO:0000314"/>
    <property type="project" value="UniProtKB"/>
</dbReference>
<dbReference type="GO" id="GO:0033209">
    <property type="term" value="P:tumor necrosis factor-mediated signaling pathway"/>
    <property type="evidence" value="ECO:0007669"/>
    <property type="project" value="Ensembl"/>
</dbReference>
<dbReference type="CDD" id="cd08305">
    <property type="entry name" value="Pyrin"/>
    <property type="match status" value="1"/>
</dbReference>
<dbReference type="FunFam" id="1.10.533.10:FF:000076">
    <property type="entry name" value="Interferon-inducible protein AIM2"/>
    <property type="match status" value="1"/>
</dbReference>
<dbReference type="FunFam" id="2.40.50.140:FF:000105">
    <property type="entry name" value="Myeloid cell nuclear differentiation antigen"/>
    <property type="match status" value="1"/>
</dbReference>
<dbReference type="Gene3D" id="1.10.533.10">
    <property type="entry name" value="Death Domain, Fas"/>
    <property type="match status" value="1"/>
</dbReference>
<dbReference type="Gene3D" id="2.40.50.140">
    <property type="entry name" value="Nucleic acid-binding proteins"/>
    <property type="match status" value="2"/>
</dbReference>
<dbReference type="InterPro" id="IPR004020">
    <property type="entry name" value="DAPIN"/>
</dbReference>
<dbReference type="InterPro" id="IPR011029">
    <property type="entry name" value="DEATH-like_dom_sf"/>
</dbReference>
<dbReference type="InterPro" id="IPR040205">
    <property type="entry name" value="HIN-200"/>
</dbReference>
<dbReference type="InterPro" id="IPR004021">
    <property type="entry name" value="HIN200/IF120x"/>
</dbReference>
<dbReference type="InterPro" id="IPR012340">
    <property type="entry name" value="NA-bd_OB-fold"/>
</dbReference>
<dbReference type="PANTHER" id="PTHR12200:SF17">
    <property type="entry name" value="INTERFERON-INDUCIBLE PROTEIN AIM2"/>
    <property type="match status" value="1"/>
</dbReference>
<dbReference type="PANTHER" id="PTHR12200">
    <property type="entry name" value="INTERFERON-INDUCIBLE PROTEIN AIM2 FAMILY MEMBER"/>
    <property type="match status" value="1"/>
</dbReference>
<dbReference type="Pfam" id="PF02760">
    <property type="entry name" value="HIN"/>
    <property type="match status" value="1"/>
</dbReference>
<dbReference type="Pfam" id="PF02758">
    <property type="entry name" value="PYRIN"/>
    <property type="match status" value="1"/>
</dbReference>
<dbReference type="SMART" id="SM01289">
    <property type="entry name" value="PYRIN"/>
    <property type="match status" value="1"/>
</dbReference>
<dbReference type="SUPFAM" id="SSF47986">
    <property type="entry name" value="DEATH domain"/>
    <property type="match status" value="1"/>
</dbReference>
<dbReference type="SUPFAM" id="SSF159141">
    <property type="entry name" value="HIN-2000 domain-like"/>
    <property type="match status" value="2"/>
</dbReference>
<dbReference type="PROSITE" id="PS50824">
    <property type="entry name" value="DAPIN"/>
    <property type="match status" value="1"/>
</dbReference>
<dbReference type="PROSITE" id="PS50834">
    <property type="entry name" value="HIN_200"/>
    <property type="match status" value="1"/>
</dbReference>
<organism>
    <name type="scientific">Mus musculus</name>
    <name type="common">Mouse</name>
    <dbReference type="NCBI Taxonomy" id="10090"/>
    <lineage>
        <taxon>Eukaryota</taxon>
        <taxon>Metazoa</taxon>
        <taxon>Chordata</taxon>
        <taxon>Craniata</taxon>
        <taxon>Vertebrata</taxon>
        <taxon>Euteleostomi</taxon>
        <taxon>Mammalia</taxon>
        <taxon>Eutheria</taxon>
        <taxon>Euarchontoglires</taxon>
        <taxon>Glires</taxon>
        <taxon>Rodentia</taxon>
        <taxon>Myomorpha</taxon>
        <taxon>Muroidea</taxon>
        <taxon>Muridae</taxon>
        <taxon>Murinae</taxon>
        <taxon>Mus</taxon>
        <taxon>Mus</taxon>
    </lineage>
</organism>
<evidence type="ECO:0000250" key="1">
    <source>
        <dbReference type="UniProtKB" id="O14862"/>
    </source>
</evidence>
<evidence type="ECO:0000255" key="2">
    <source>
        <dbReference type="PROSITE-ProRule" id="PRU00061"/>
    </source>
</evidence>
<evidence type="ECO:0000255" key="3">
    <source>
        <dbReference type="PROSITE-ProRule" id="PRU00106"/>
    </source>
</evidence>
<evidence type="ECO:0000256" key="4">
    <source>
        <dbReference type="SAM" id="MobiDB-lite"/>
    </source>
</evidence>
<evidence type="ECO:0000269" key="5">
    <source>
    </source>
</evidence>
<evidence type="ECO:0000269" key="6">
    <source>
    </source>
</evidence>
<evidence type="ECO:0000269" key="7">
    <source>
    </source>
</evidence>
<evidence type="ECO:0000269" key="8">
    <source>
    </source>
</evidence>
<evidence type="ECO:0000269" key="9">
    <source>
    </source>
</evidence>
<evidence type="ECO:0000269" key="10">
    <source>
    </source>
</evidence>
<evidence type="ECO:0000269" key="11">
    <source>
    </source>
</evidence>
<evidence type="ECO:0000269" key="12">
    <source>
    </source>
</evidence>
<evidence type="ECO:0000269" key="13">
    <source>
    </source>
</evidence>
<evidence type="ECO:0000269" key="14">
    <source>
    </source>
</evidence>
<evidence type="ECO:0000269" key="15">
    <source>
    </source>
</evidence>
<evidence type="ECO:0000269" key="16">
    <source>
    </source>
</evidence>
<evidence type="ECO:0000269" key="17">
    <source>
    </source>
</evidence>
<evidence type="ECO:0000269" key="18">
    <source>
    </source>
</evidence>
<evidence type="ECO:0000269" key="19">
    <source>
    </source>
</evidence>
<evidence type="ECO:0000269" key="20">
    <source>
    </source>
</evidence>
<evidence type="ECO:0000269" key="21">
    <source>
    </source>
</evidence>
<evidence type="ECO:0000269" key="22">
    <source>
    </source>
</evidence>
<evidence type="ECO:0000269" key="23">
    <source>
    </source>
</evidence>
<evidence type="ECO:0000269" key="24">
    <source>
    </source>
</evidence>
<evidence type="ECO:0000269" key="25">
    <source>
    </source>
</evidence>
<evidence type="ECO:0000269" key="26">
    <source>
    </source>
</evidence>
<evidence type="ECO:0000303" key="27">
    <source>
    </source>
</evidence>
<evidence type="ECO:0000303" key="28">
    <source>
    </source>
</evidence>
<evidence type="ECO:0000305" key="29"/>
<evidence type="ECO:0000312" key="30">
    <source>
        <dbReference type="MGI" id="MGI:2686159"/>
    </source>
</evidence>
<evidence type="ECO:0007744" key="31">
    <source>
        <dbReference type="PDB" id="2N00"/>
    </source>
</evidence>
<evidence type="ECO:0007829" key="32">
    <source>
        <dbReference type="PDB" id="2N00"/>
    </source>
</evidence>
<evidence type="ECO:0007829" key="33">
    <source>
        <dbReference type="PDB" id="4JBM"/>
    </source>
</evidence>
<comment type="function">
    <text evidence="5 6 7 8 9 10 11 12 13 14 15 21 23 25 26">Sensor component of the AIM2 inflammasome, which mediates inflammasome activation in response to the presence of double-stranded DNA (dsDNA) in the cytosol, leading to subsequent pyroptosis (PubMed:19131592, PubMed:19158675, PubMed:19158676, PubMed:19158679, PubMed:20351692, PubMed:20351693, PubMed:20417169, PubMed:20457908, PubMed:21902795, PubMed:23567559, PubMed:32350463, PubMed:34006824). Inflammasomes are supramolecular complexes that assemble in the cytosol in response to pathogens and other damage-associated signals and play critical roles in innate immunity and inflammation (PubMed:19131592, PubMed:19158675, PubMed:19158676, PubMed:20351692, PubMed:20351693, PubMed:20417169, PubMed:20457908, PubMed:21902795, PubMed:23567559, PubMed:32350463). Acts as a recognition receptor (PRR): specifically recognizes and binds dsDNA in the cytosol, and mediates the formation of the inflammasome polymeric complex composed of AIM2, CASP1 and PYCARD/ASC (PubMed:19131592, PubMed:19158675, PubMed:19158676, PubMed:20351692, PubMed:20351693, PubMed:20417169, PubMed:20457908, PubMed:21902795, PubMed:23567559). Recruitment of pro-caspase-1 (proCASP1) to the AIM2 inflammasome promotes caspase-1 (CASP1) activation, which subsequently cleaves and activates inflammatory cytokines IL1B and IL18 and gasdermin-D (GSDMD), promoting cytokine secretion (PubMed:19158676). In some cells, CASP1 activation mediates cleavage and activation of GSDMD, triggering pyroptosis without promoting cytokine secretion (PubMed:27846608, PubMed:32350463). Detects cytosolic dsDNA of viral and bacterial origin in a non-sequence-specific manner (PubMed:19131592, PubMed:19158675, PubMed:20351692, PubMed:23567559). Involved in the DNA damage response caused by acute ionizing radiation by mediating pyroptosis of intestinal epithelial cells and bone marrow cells in response to double-strand DNA breaks (PubMed:27846608). Mechanistically, AIM2 senses DNA damage in the nucleus to mediate inflammasome assembly and inflammatory cell death (PubMed:27846608). Also acts as a regulator of neurodevelopment via its role in the DNA damage response: acts by promoting neural cell death in response to DNA damage in the developing brain, thereby purging genetically compromised cells of the central nervous system (PubMed:32350463). Pyroptosis mediated by the AIM2 inflammasome in response to DNA damage is dependent on GSDMD without involving IL1B and IL18 cytokine secretion (PubMed:27846608, PubMed:32350463). Also acts as a mediator of pyroptosis, necroptosis and apoptosis (PANoptosis), an integral part of host defense against pathogens, in response to bacterial infection (PubMed:34471287). Can also trigger PYCARD/ASC-dependent, caspase-1-independent cell death that involves caspase-8 (CASP8) (PubMed:22555457).</text>
</comment>
<comment type="function">
    <text evidence="17 18 24">Also acts as a tumor suppressor independently of its role in inflammatory response (PubMed:26095253). Able to suppress overt cell proliferation in enterocytes: restricts stem cell proliferation in the intestinal mucosa in an inflammasome-independent manner, contributing to a decrease in the likelihood of colorectal cancer development (PubMed:26095253, PubMed:26107252). AIM2 suppresses cell proliferation by inhibiting phosphorylation of AKT1 at 'Ser-473', preventing AKT1 activation and AKT-mTOR signaling pathway (PubMed:26095253, PubMed:26107252). Inhibits AKT1 phosphorylation both by inhibiting the activity of PRKDC/DNA-PK kinase and promoting dephosphorylation by PP2A phosphatase (PubMed:26107252, PubMed:33505023). Also acts as a key regulator of regulatory T-cells (Treg) homeostasis by promoting their stability: acts by preventing AKT1 activation (PubMed:33505023). Its role in Treg homeostasis is important to restain autoimmune diseases (PubMed:33505023).</text>
</comment>
<comment type="activity regulation">
    <text evidence="1 5 16 19 21 22 23 25">Inactive in absence of double-stranded DNA (dsDNA) (By similarity). Homooligomerizes upon binding to dsDNA, dsDNA serving as an oligomerization platform (By similarity). AIM2 requires large dsDNA to generate a structural template that couples dsDNA ligand-binding and homooligomerization (By similarity). Homooligomerization is followed by recruitment of PYCARD/ASC to initiate speck formation (nucleation) (By similarity). AIM2 and PYCARD/ASC homooligomer filaments assemble bidirectionally and the recognition between AIM2 and PYCARD/ASC oligomers occurs in a head-to-tail manner (By similarity). Clustered PYCARD/ASC nucleates the formation of CASP1 filaments through the interaction of their respective CARD domains, acting as a platform for CASP1 polymerization and activation (By similarity). Active CASP1 then specifically processes protein precursors, such as gasdermin-D (GSDMD), IL1B and IL18, leading to the release of mature cytokines in the extracellular milieu or pyroptosis, depending on cell type (PubMed:27846608, PubMed:32350463). AIM2 can be activated in response to events that cause genomic DNA (HIV protease inhibitor nelfinavir) or mitochondrial DNA release in the cytoplasm (such as Perfluoroalkyl substance pollutants or cholesterol overload) (PubMed:27462105, PubMed:29033131, PubMed:34006824). Activation of the AIM2 inflammasome is inhibited by IFI202 (PubMed:19131592, PubMed:23850291). Activation of the AIM2 inflammasome is inhibited by TRIM11, which promotes autophagy-dependent degradation of AIM2 (By similarity).</text>
</comment>
<comment type="subunit">
    <text evidence="1 5 16 24 26">Self-associates; forms homooligomers in response to cytosolic double-stranded DNA (dsDNA) and the dsDNA seems to serve as oligomerization platform (By similarity). Component of AIM2 inflammasome, which consists of a signal sensor component (AIM2), an adapter (PYCARD/ASC), which recruits an effector pro-inflammatory caspase (CASP1) (By similarity). Interacts (via pyrin domain) with PYCARD/ASC (via pyrin domain); interaction is direct (By similarity). Component of the AIM2 PANoptosome complex, a multiprotein complex that drives inflammatory cell death (PANoptosis) (PubMed:34471287). Interacts with EIF2AK2/PKR (By similarity). Interacts with MAPRE1 (By similarity). Interacts (via HIN-200 domain) with IFI202 (via HIN-200 domain 2); preventing activation of the AIM2 inflammasome (PubMed:19131592, PubMed:23850291). Interacts with RACK1; promoting association with PP2A phosphatase and dephosphorylation of AKT1 (PubMed:33505023). Interacts with TRIM11; promoting AIM2 recruitment to autophagosomes and autophagy-dependent degradation (By similarity).</text>
</comment>
<comment type="interaction">
    <interactant intactId="EBI-6253384">
        <id>Q91VJ1</id>
    </interactant>
    <interactant intactId="EBI-6253384">
        <id>Q91VJ1</id>
        <label>Aim2</label>
    </interactant>
    <organismsDiffer>false</organismsDiffer>
    <experiments>2</experiments>
</comment>
<comment type="subcellular location">
    <subcellularLocation>
        <location evidence="8 14">Cytoplasm</location>
    </subcellularLocation>
    <subcellularLocation>
        <location evidence="8 21">Inflammasome</location>
    </subcellularLocation>
    <subcellularLocation>
        <location evidence="21">Nucleus</location>
    </subcellularLocation>
    <text evidence="8 21">Activated inflammasomes can aggregate in the cytosol as speck-like particles (PubMed:19158679). Activated inflammasomes can also aggregate in the nucleus in response to DNA damage: AIM2 is recruited to double-strand DNA breaks and mediates activation of the AIM2 inflammasome (PubMed:27846608).</text>
</comment>
<comment type="tissue specificity">
    <text evidence="20 24">Expressed in developing neurons (PubMed:27561456). Highly expressed in regulatory T-cells (Treg) (PubMed:33505023).</text>
</comment>
<comment type="induction">
    <text evidence="24">By TGF-beta.</text>
</comment>
<comment type="domain">
    <text evidence="1">The pyrin domain mediates homotypic interaction with PYCARD/ASC.</text>
</comment>
<comment type="domain">
    <text evidence="15">The HIN-200 domain mediates dsDNA binding via electrostatic interactions.</text>
</comment>
<comment type="PTM">
    <text evidence="1">Degraded via selective autophagy following interaction with TRIM11.</text>
</comment>
<comment type="disruption phenotype">
    <text evidence="17 18 20 21 23">Mice display defects in neuronal morphology and changes in behavior, characterized by lower locomotor activity, anxiety and reduced auditory fear memory (PubMed:27561456, PubMed:32350463). Mice are protected from pyroptosis of intestinal epithelial cells caused by acute ionizing and subsequent intestinal damage: in contrast to wild-type mice, crypts of Aim2-deficient mice maintain their integrity (PubMed:27846608). Mice develop more tumors in the colon in the azoxymethane and dextran sulfate sodium model of colorectal cancer (PubMed:26095253, PubMed:26107252).</text>
</comment>
<comment type="similarity">
    <text evidence="29">Belongs to the HIN-200 family.</text>
</comment>
<comment type="sequence caution" evidence="29">
    <conflict type="erroneous initiation">
        <sequence resource="EMBL-CDS" id="AAH09664"/>
    </conflict>
</comment>
<sequence length="354" mass="40155">MESEYREMLLLTGLDHITEEELKRFKYFALTEFQIARSTLDVADRTELADHLIQSAGAASAVTKAINIFQKLNYMHIANALEEKKKEAERKLMTNTKKRGTQKVENRSQAENCSAASATRSDNDFKEQAATEVCPQAKPQKKQMVAEQEAIREDLQKDPLVVTVLKAINPFECETQEGRQEIFHATVATETDFFFVKVLNAQFKDKFIPKRTIKISNYLWHSNFMEVTSSSVVVDVESNHEVPNNVVKRARETPRISKLKIQPCGTIVNGLFKVQKITEEKDRVLYGIHDKTGTMEVLVLGNPSKTKCEEGDKIRLTFFEVSKNGVKIQLKSGPCSFFKVIKAAKPKTDMKSVE</sequence>
<gene>
    <name evidence="28 30" type="primary">Aim2</name>
    <name evidence="30" type="synonym">Gm1313</name>
    <name evidence="27" type="synonym">Ifi210</name>
</gene>
<reference key="1">
    <citation type="journal article" date="2009" name="PLoS Biol.">
        <title>Lineage-specific biology revealed by a finished genome assembly of the mouse.</title>
        <authorList>
            <person name="Church D.M."/>
            <person name="Goodstadt L."/>
            <person name="Hillier L.W."/>
            <person name="Zody M.C."/>
            <person name="Goldstein S."/>
            <person name="She X."/>
            <person name="Bult C.J."/>
            <person name="Agarwala R."/>
            <person name="Cherry J.L."/>
            <person name="DiCuccio M."/>
            <person name="Hlavina W."/>
            <person name="Kapustin Y."/>
            <person name="Meric P."/>
            <person name="Maglott D."/>
            <person name="Birtle Z."/>
            <person name="Marques A.C."/>
            <person name="Graves T."/>
            <person name="Zhou S."/>
            <person name="Teague B."/>
            <person name="Potamousis K."/>
            <person name="Churas C."/>
            <person name="Place M."/>
            <person name="Herschleb J."/>
            <person name="Runnheim R."/>
            <person name="Forrest D."/>
            <person name="Amos-Landgraf J."/>
            <person name="Schwartz D.C."/>
            <person name="Cheng Z."/>
            <person name="Lindblad-Toh K."/>
            <person name="Eichler E.E."/>
            <person name="Ponting C.P."/>
        </authorList>
    </citation>
    <scope>NUCLEOTIDE SEQUENCE [LARGE SCALE GENOMIC DNA]</scope>
    <source>
        <strain>C57BL/6J</strain>
    </source>
</reference>
<reference key="2">
    <citation type="journal article" date="2004" name="Genome Res.">
        <title>The status, quality, and expansion of the NIH full-length cDNA project: the Mammalian Gene Collection (MGC).</title>
        <authorList>
            <consortium name="The MGC Project Team"/>
        </authorList>
    </citation>
    <scope>NUCLEOTIDE SEQUENCE [LARGE SCALE MRNA] OF 219-354</scope>
    <source>
        <strain>FVB/N</strain>
        <tissue>Mammary tumor</tissue>
    </source>
</reference>
<reference key="3">
    <citation type="journal article" date="2005" name="Exp. Cell Res.">
        <title>The HIN-200 family: more than interferon-inducible genes?</title>
        <authorList>
            <person name="Ludlow L.E.A."/>
            <person name="Johnstone R.W."/>
            <person name="Clarke C.J.P."/>
        </authorList>
    </citation>
    <scope>IDENTIFICATION</scope>
</reference>
<reference key="4">
    <citation type="journal article" date="2009" name="Nature">
        <title>AIM2 activates the inflammasome and cell death in response to cytoplasmic DNA.</title>
        <authorList>
            <person name="Fernandes-Alnemri T."/>
            <person name="Yu J.W."/>
            <person name="Datta P."/>
            <person name="Wu J."/>
            <person name="Alnemri E.S."/>
        </authorList>
    </citation>
    <scope>FUNCTION</scope>
    <scope>ACTIVITY REGULATION</scope>
</reference>
<reference key="5">
    <citation type="journal article" date="2009" name="Nature">
        <title>AIM2 recognizes cytosolic dsDNA and forms a caspase-1-activating inflammasome with ASC.</title>
        <authorList>
            <person name="Hornung V."/>
            <person name="Ablasser A."/>
            <person name="Charrel-Dennis M."/>
            <person name="Bauernfeind F."/>
            <person name="Horvath G."/>
            <person name="Caffrey D.R."/>
            <person name="Latz E."/>
            <person name="Fitzgerald K.A."/>
        </authorList>
    </citation>
    <scope>FUNCTION</scope>
</reference>
<reference key="6">
    <citation type="journal article" date="2009" name="Nat. Immunol.">
        <title>An orthogonal proteomic-genomic screen identifies AIM2 as a cytoplasmic DNA sensor for the inflammasome.</title>
        <authorList>
            <person name="Burckstummer T."/>
            <person name="Baumann C."/>
            <person name="Bluml S."/>
            <person name="Dixit E."/>
            <person name="Durnberger G."/>
            <person name="Jahn H."/>
            <person name="Planyavsky M."/>
            <person name="Bilban M."/>
            <person name="Colinge J."/>
            <person name="Bennett K.L."/>
            <person name="Superti-Furga G."/>
        </authorList>
    </citation>
    <scope>FUNCTION</scope>
    <scope>SUBCELLULAR LOCATION</scope>
</reference>
<reference key="7">
    <citation type="journal article" date="2009" name="Science">
        <title>HIN-200 proteins regulate caspase activation in response to foreign cytoplasmic DNA.</title>
        <authorList>
            <person name="Roberts T.L."/>
            <person name="Idris A."/>
            <person name="Dunn J.A."/>
            <person name="Kelly G.M."/>
            <person name="Burnton C.M."/>
            <person name="Hodgson S."/>
            <person name="Hardy L.L."/>
            <person name="Garceau V."/>
            <person name="Sweet M.J."/>
            <person name="Ross I.L."/>
            <person name="Hume D.A."/>
            <person name="Stacey K.J."/>
        </authorList>
    </citation>
    <scope>FUNCTION</scope>
    <scope>ACTIVITY REGULATION</scope>
</reference>
<reference key="8">
    <citation type="journal article" date="2010" name="Cell Host Microbe">
        <title>Listeria monocytogenes triggers AIM2-mediated pyroptosis upon infrequent bacteriolysis in the macrophage cytosol.</title>
        <authorList>
            <person name="Sauer J.D."/>
            <person name="Witte C.E."/>
            <person name="Zemansky J."/>
            <person name="Hanson B."/>
            <person name="Lauer P."/>
            <person name="Portnoy D.A."/>
        </authorList>
    </citation>
    <scope>FUNCTION</scope>
</reference>
<reference key="9">
    <citation type="journal article" date="2010" name="Nat. Immunol.">
        <title>The AIM2 inflammasome is critical for innate immunity to Francisella tularensis.</title>
        <authorList>
            <person name="Fernandes-Alnemri T."/>
            <person name="Yu J.W."/>
            <person name="Juliana C."/>
            <person name="Solorzano L."/>
            <person name="Kang S."/>
            <person name="Wu J."/>
            <person name="Datta P."/>
            <person name="McCormick M."/>
            <person name="Huang L."/>
            <person name="McDermott E."/>
            <person name="Eisenlohr L."/>
            <person name="Landel C.P."/>
            <person name="Alnemri E.S."/>
        </authorList>
    </citation>
    <scope>FUNCTION</scope>
</reference>
<reference key="10">
    <citation type="journal article" date="2010" name="Nat. Immunol.">
        <title>The AIM2 inflammasome is essential for host defense against cytosolic bacteria and DNA viruses.</title>
        <authorList>
            <person name="Rathinam V.A."/>
            <person name="Jiang Z."/>
            <person name="Waggoner S.N."/>
            <person name="Sharma S."/>
            <person name="Cole L.E."/>
            <person name="Waggoner L."/>
            <person name="Vanaja S.K."/>
            <person name="Monks B.G."/>
            <person name="Ganesan S."/>
            <person name="Latz E."/>
            <person name="Hornung V."/>
            <person name="Vogel S.N."/>
            <person name="Szomolanyi-Tsuda E."/>
            <person name="Fitzgerald K.A."/>
        </authorList>
    </citation>
    <scope>FUNCTION</scope>
</reference>
<reference key="11">
    <citation type="journal article" date="2010" name="Proc. Natl. Acad. Sci. U.S.A.">
        <title>Absent in melanoma 2 is required for innate immune recognition of Francisella tularensis.</title>
        <authorList>
            <person name="Jones J.W."/>
            <person name="Kayagaki N."/>
            <person name="Broz P."/>
            <person name="Henry T."/>
            <person name="Newton K."/>
            <person name="O'Rourke K."/>
            <person name="Chan S."/>
            <person name="Dong J."/>
            <person name="Qu Y."/>
            <person name="Roose-Girma M."/>
            <person name="Dixit V.M."/>
            <person name="Monack D.M."/>
        </authorList>
    </citation>
    <scope>FUNCTION</scope>
</reference>
<reference key="12">
    <citation type="journal article" date="2012" name="Cell Death Differ.">
        <title>AIM2/ASC triggers caspase-8-dependent apoptosis in Francisella-infected caspase-1-deficient macrophages.</title>
        <authorList>
            <person name="Pierini R."/>
            <person name="Juruj C."/>
            <person name="Perret M."/>
            <person name="Jones C.L."/>
            <person name="Mangeot P."/>
            <person name="Weiss D.S."/>
            <person name="Henry T."/>
        </authorList>
    </citation>
    <scope>FUNCTION</scope>
    <scope>SUBCELLULAR LOCATION</scope>
</reference>
<reference key="13">
    <citation type="journal article" date="2012" name="Cell. Microbiol.">
        <title>Francisella infection triggers activation of the AIM2 inflammasome in murine dendritic cells.</title>
        <authorList>
            <person name="Belhocine K."/>
            <person name="Monack D.M."/>
        </authorList>
    </citation>
    <scope>FUNCTION</scope>
</reference>
<reference key="14">
    <citation type="journal article" date="2013" name="Cell Rep.">
        <title>Molecular mechanism for p202-mediated specific inhibition of AIM2 inflammasome activation.</title>
        <authorList>
            <person name="Yin Q."/>
            <person name="Sester D.P."/>
            <person name="Tian Y."/>
            <person name="Hsiao Y.S."/>
            <person name="Lu A."/>
            <person name="Cridland J.A."/>
            <person name="Sagulenko V."/>
            <person name="Thygesen S.J."/>
            <person name="Choubey D."/>
            <person name="Hornung V."/>
            <person name="Walz T."/>
            <person name="Stacey K.J."/>
            <person name="Wu H."/>
        </authorList>
    </citation>
    <scope>ACTIVITY REGULATION</scope>
    <scope>INTERACTION WITH IFI202</scope>
</reference>
<reference key="15">
    <citation type="journal article" date="2015" name="Cell">
        <title>Critical role for the DNA sensor AIM2 in stem cell proliferation and cancer.</title>
        <authorList>
            <person name="Man S.M."/>
            <person name="Zhu Q."/>
            <person name="Zhu L."/>
            <person name="Liu Z."/>
            <person name="Karki R."/>
            <person name="Malik A."/>
            <person name="Sharma D."/>
            <person name="Li L."/>
            <person name="Malireddi R.K."/>
            <person name="Gurung P."/>
            <person name="Neale G."/>
            <person name="Olsen S.R."/>
            <person name="Carter R.A."/>
            <person name="McGoldrick D.J."/>
            <person name="Wu G."/>
            <person name="Finkelstein D."/>
            <person name="Vogel P."/>
            <person name="Gilbertson R.J."/>
            <person name="Kanneganti T.D."/>
        </authorList>
    </citation>
    <scope>FUNCTION</scope>
    <scope>DISRUPTION PHENOTYPE</scope>
</reference>
<reference key="16">
    <citation type="journal article" date="2015" name="Nat. Med.">
        <title>Inflammasome-independent role of AIM2 in suppressing colon tumorigenesis via DNA-PK and Akt.</title>
        <authorList>
            <person name="Wilson J.E."/>
            <person name="Petrucelli A.S."/>
            <person name="Chen L."/>
            <person name="Koblansky A.A."/>
            <person name="Truax A.D."/>
            <person name="Oyama Y."/>
            <person name="Rogers A.B."/>
            <person name="Brickey W.J."/>
            <person name="Wang Y."/>
            <person name="Schneider M."/>
            <person name="Muehlbauer M."/>
            <person name="Chou W.C."/>
            <person name="Barker B.R."/>
            <person name="Jobin C."/>
            <person name="Allbritton N.L."/>
            <person name="Ramsden D.A."/>
            <person name="Davis B.K."/>
            <person name="Ting J.P."/>
        </authorList>
    </citation>
    <scope>FUNCTION</scope>
    <scope>DISRUPTION PHENOTYPE</scope>
</reference>
<reference key="17">
    <citation type="journal article" date="2016" name="Proc. Natl. Acad. Sci. U.S.A.">
        <title>AIM2 inflammasome is activated by pharmacological disruption of nuclear envelope integrity.</title>
        <authorList>
            <person name="Di Micco A."/>
            <person name="Frera G."/>
            <person name="Lugrin J."/>
            <person name="Jamilloux Y."/>
            <person name="Hsu E.T."/>
            <person name="Tardivel A."/>
            <person name="De Gassart A."/>
            <person name="Zaffalon L."/>
            <person name="Bujisic B."/>
            <person name="Siegert S."/>
            <person name="Quadroni M."/>
            <person name="Broz P."/>
            <person name="Henry T."/>
            <person name="Hrycyna C.A."/>
            <person name="Martinon F."/>
        </authorList>
    </citation>
    <scope>ACTIVITY REGULATION</scope>
</reference>
<reference key="18">
    <citation type="journal article" date="2016" name="Science">
        <title>The DNA-sensing AIM2 inflammasome controls radiation-induced cell death and tissue injury.</title>
        <authorList>
            <person name="Hu B."/>
            <person name="Jin C."/>
            <person name="Li H.B."/>
            <person name="Tong J."/>
            <person name="Ouyang X."/>
            <person name="Cetinbas N.M."/>
            <person name="Zhu S."/>
            <person name="Strowig T."/>
            <person name="Lam F.C."/>
            <person name="Zhao C."/>
            <person name="Henao-Mejia J."/>
            <person name="Yilmaz O."/>
            <person name="Fitzgerald K.A."/>
            <person name="Eisenbarth S.C."/>
            <person name="Elinav E."/>
            <person name="Flavell R.A."/>
        </authorList>
    </citation>
    <scope>FUNCTION</scope>
    <scope>ACTIVITY REGULATION</scope>
    <scope>SUBCELLULAR LOCATION</scope>
    <scope>DISRUPTION PHENOTYPE</scope>
</reference>
<reference key="19">
    <citation type="journal article" date="2016" name="Sci. Rep.">
        <title>AIM 2 inflammasomes regulate neuronal morphology and influence anxiety and memory in mice.</title>
        <authorList>
            <person name="Wu P.J."/>
            <person name="Liu H.Y."/>
            <person name="Huang T.N."/>
            <person name="Hsueh Y.P."/>
        </authorList>
    </citation>
    <scope>TISSUE SPECIFICITY</scope>
    <scope>DISRUPTION PHENOTYPE</scope>
</reference>
<reference key="20">
    <citation type="journal article" date="2017" name="Cell">
        <title>Oxysterol restraint of cholesterol synthesis prevents AIM2 inflammasome activation.</title>
        <authorList>
            <person name="Dang E.V."/>
            <person name="McDonald J.G."/>
            <person name="Russell D.W."/>
            <person name="Cyster J.G."/>
        </authorList>
    </citation>
    <scope>ACTIVITY REGULATION</scope>
</reference>
<reference key="21">
    <citation type="journal article" date="2020" name="Nature">
        <title>AIM2 inflammasome surveillance of DNA damage shapes neurodevelopment.</title>
        <authorList>
            <person name="Lammert C.R."/>
            <person name="Frost E.L."/>
            <person name="Bellinger C.E."/>
            <person name="Bolte A.C."/>
            <person name="McKee C.A."/>
            <person name="Hurt M.E."/>
            <person name="Paysour M.J."/>
            <person name="Ennerfelt H.E."/>
            <person name="Lukens J.R."/>
        </authorList>
    </citation>
    <scope>FUNCTION</scope>
    <scope>ACTIVITY REGULATION</scope>
    <scope>DISRUPTION PHENOTYPE</scope>
</reference>
<reference key="22">
    <citation type="journal article" date="2021" name="Nature">
        <title>AIM2 in regulatory T cells restrains autoimmune diseases.</title>
        <authorList>
            <person name="Chou W.C."/>
            <person name="Guo Z."/>
            <person name="Guo H."/>
            <person name="Chen L."/>
            <person name="Zhang G."/>
            <person name="Liang K."/>
            <person name="Xie L."/>
            <person name="Tan X."/>
            <person name="Gibson S.A."/>
            <person name="Rampanelli E."/>
            <person name="Wang Y."/>
            <person name="Montgomery S.A."/>
            <person name="Brickey W.J."/>
            <person name="Deng M."/>
            <person name="Freeman L."/>
            <person name="Zhang S."/>
            <person name="Su M.A."/>
            <person name="Chen X."/>
            <person name="Wan Y.Y."/>
            <person name="Ting J.P."/>
        </authorList>
    </citation>
    <scope>FUNCTION</scope>
    <scope>INTERACTION WITH RACK1</scope>
    <scope>TISSUE SPECIFICITY</scope>
    <scope>INDUCTION</scope>
</reference>
<reference key="23">
    <citation type="journal article" date="2021" name="Nat. Commun.">
        <title>Perfluoroalkyl substance pollutants activate the innate immune system through the AIM2 inflammasome.</title>
        <authorList>
            <person name="Wang L.Q."/>
            <person name="Liu T."/>
            <person name="Yang S."/>
            <person name="Sun L."/>
            <person name="Zhao Z.Y."/>
            <person name="Li L.Y."/>
            <person name="She Y.C."/>
            <person name="Zheng Y.Y."/>
            <person name="Ye X.Y."/>
            <person name="Bao Q."/>
            <person name="Dong G.H."/>
            <person name="Li C.W."/>
            <person name="Cui J."/>
        </authorList>
    </citation>
    <scope>FUNCTION</scope>
    <scope>ACTIVITY REGULATION</scope>
</reference>
<reference key="24">
    <citation type="journal article" date="2021" name="Nature">
        <title>AIM2 forms a complex with pyrin and ZBP1 to drive PANoptosis and host defence.</title>
        <authorList>
            <person name="Lee S."/>
            <person name="Karki R."/>
            <person name="Wang Y."/>
            <person name="Nguyen L.N."/>
            <person name="Kalathur R.C."/>
            <person name="Kanneganti T.D."/>
        </authorList>
    </citation>
    <scope>FUNCTION</scope>
    <scope>IDENTIFICATION IN THE AIM2 PANOPTOSOME COMPLEX</scope>
</reference>
<reference key="25">
    <citation type="journal article" date="2013" name="Cell Res.">
        <title>Structural basis for termination of AIM2-mediated signaling by p202.</title>
        <authorList>
            <person name="Ru H."/>
            <person name="Ni X."/>
            <person name="Zhao L."/>
            <person name="Crowley C."/>
            <person name="Ding W."/>
            <person name="Hung L.W."/>
            <person name="Shaw N."/>
            <person name="Cheng G."/>
            <person name="Liu Z.J."/>
        </authorList>
    </citation>
    <scope>X-RAY CRYSTALLOGRAPHY (2.22 ANGSTROMS) OF 158-349 IN COMPLEX WITH DNA</scope>
    <scope>FUNCTION</scope>
    <scope>DOMAIN</scope>
    <scope>DNA-BINDING</scope>
</reference>
<reference evidence="31" key="26">
    <citation type="journal article" date="2015" name="Biochem. Biophys. Res. Commun.">
        <title>The NMR solution structure of AIM2 PYD domain from Mus musculus reveals a distinct alpha2-alpha3 helix conformation from its human homologues.</title>
        <authorList>
            <person name="Hou X."/>
            <person name="Niu X."/>
        </authorList>
    </citation>
    <scope>STRUCTURE BY NMR OF 1-95</scope>
</reference>